<comment type="function">
    <text evidence="1">Part of the energy-coupling factor (ECF) transporter complex CbiMNOQ involved in cobalt import.</text>
</comment>
<comment type="pathway">
    <text evidence="1">Cofactor biosynthesis; adenosylcobalamin biosynthesis.</text>
</comment>
<comment type="subunit">
    <text evidence="1">Forms an energy-coupling factor (ECF) transporter complex composed of an ATP-binding protein (A component, CbiO), a transmembrane protein (T component, CbiQ) and 2 possible substrate-capture proteins (S components, CbiM and CbiN) of unknown stoichimetry.</text>
</comment>
<comment type="subcellular location">
    <subcellularLocation>
        <location evidence="1">Cell membrane</location>
        <topology evidence="1">Multi-pass membrane protein</topology>
    </subcellularLocation>
</comment>
<comment type="similarity">
    <text evidence="1">Belongs to the CbiM family.</text>
</comment>
<organism>
    <name type="scientific">Methanosarcina barkeri (strain Fusaro / DSM 804)</name>
    <dbReference type="NCBI Taxonomy" id="269797"/>
    <lineage>
        <taxon>Archaea</taxon>
        <taxon>Methanobacteriati</taxon>
        <taxon>Methanobacteriota</taxon>
        <taxon>Stenosarchaea group</taxon>
        <taxon>Methanomicrobia</taxon>
        <taxon>Methanosarcinales</taxon>
        <taxon>Methanosarcinaceae</taxon>
        <taxon>Methanosarcina</taxon>
    </lineage>
</organism>
<name>CBIM2_METBF</name>
<protein>
    <recommendedName>
        <fullName evidence="1">Putative cobalt transport protein CbiM 2</fullName>
    </recommendedName>
    <alternativeName>
        <fullName evidence="1">Energy-coupling factor transporter probable substrate-capture protein CbiM 2</fullName>
        <shortName evidence="1">ECF transporter S component CbiM 2</shortName>
    </alternativeName>
</protein>
<dbReference type="EMBL" id="CP000099">
    <property type="protein sequence ID" value="AAZ71074.1"/>
    <property type="molecule type" value="Genomic_DNA"/>
</dbReference>
<dbReference type="SMR" id="Q46AL8"/>
<dbReference type="STRING" id="269797.Mbar_A2145"/>
<dbReference type="PaxDb" id="269797-Mbar_A2145"/>
<dbReference type="KEGG" id="mba:Mbar_A2145"/>
<dbReference type="eggNOG" id="arCOG02248">
    <property type="taxonomic scope" value="Archaea"/>
</dbReference>
<dbReference type="HOGENOM" id="CLU_052508_3_0_2"/>
<dbReference type="OrthoDB" id="30946at2157"/>
<dbReference type="UniPathway" id="UPA00148"/>
<dbReference type="GO" id="GO:0043190">
    <property type="term" value="C:ATP-binding cassette (ABC) transporter complex"/>
    <property type="evidence" value="ECO:0007669"/>
    <property type="project" value="InterPro"/>
</dbReference>
<dbReference type="GO" id="GO:0015087">
    <property type="term" value="F:cobalt ion transmembrane transporter activity"/>
    <property type="evidence" value="ECO:0007669"/>
    <property type="project" value="UniProtKB-UniRule"/>
</dbReference>
<dbReference type="GO" id="GO:0009236">
    <property type="term" value="P:cobalamin biosynthetic process"/>
    <property type="evidence" value="ECO:0007669"/>
    <property type="project" value="UniProtKB-UniRule"/>
</dbReference>
<dbReference type="FunFam" id="1.10.1760.20:FF:000001">
    <property type="entry name" value="Cobalt transport protein CbiM"/>
    <property type="match status" value="1"/>
</dbReference>
<dbReference type="Gene3D" id="1.10.1760.20">
    <property type="match status" value="1"/>
</dbReference>
<dbReference type="HAMAP" id="MF_01462">
    <property type="entry name" value="CbiM"/>
    <property type="match status" value="1"/>
</dbReference>
<dbReference type="InterPro" id="IPR018024">
    <property type="entry name" value="CbiM"/>
</dbReference>
<dbReference type="InterPro" id="IPR002751">
    <property type="entry name" value="CbiM/NikMN"/>
</dbReference>
<dbReference type="NCBIfam" id="TIGR00123">
    <property type="entry name" value="cbiM"/>
    <property type="match status" value="1"/>
</dbReference>
<dbReference type="NCBIfam" id="NF006184">
    <property type="entry name" value="PRK08319.1"/>
    <property type="match status" value="1"/>
</dbReference>
<dbReference type="PANTHER" id="PTHR43627">
    <property type="match status" value="1"/>
</dbReference>
<dbReference type="PANTHER" id="PTHR43627:SF1">
    <property type="entry name" value="COBALT TRANSPORT PROTEIN CBIM"/>
    <property type="match status" value="1"/>
</dbReference>
<dbReference type="Pfam" id="PF01891">
    <property type="entry name" value="CbiM"/>
    <property type="match status" value="1"/>
</dbReference>
<gene>
    <name evidence="1" type="primary">cbiM2</name>
    <name type="ordered locus">Mbar_A2145</name>
</gene>
<proteinExistence type="inferred from homology"/>
<keyword id="KW-1003">Cell membrane</keyword>
<keyword id="KW-0169">Cobalamin biosynthesis</keyword>
<keyword id="KW-0170">Cobalt</keyword>
<keyword id="KW-0171">Cobalt transport</keyword>
<keyword id="KW-0406">Ion transport</keyword>
<keyword id="KW-0472">Membrane</keyword>
<keyword id="KW-0812">Transmembrane</keyword>
<keyword id="KW-1133">Transmembrane helix</keyword>
<keyword id="KW-0813">Transport</keyword>
<reference key="1">
    <citation type="journal article" date="2006" name="J. Bacteriol.">
        <title>The Methanosarcina barkeri genome: comparative analysis with Methanosarcina acetivorans and Methanosarcina mazei reveals extensive rearrangement within methanosarcinal genomes.</title>
        <authorList>
            <person name="Maeder D.L."/>
            <person name="Anderson I."/>
            <person name="Brettin T.S."/>
            <person name="Bruce D.C."/>
            <person name="Gilna P."/>
            <person name="Han C.S."/>
            <person name="Lapidus A."/>
            <person name="Metcalf W.W."/>
            <person name="Saunders E."/>
            <person name="Tapia R."/>
            <person name="Sowers K.R."/>
        </authorList>
    </citation>
    <scope>NUCLEOTIDE SEQUENCE [LARGE SCALE GENOMIC DNA]</scope>
    <source>
        <strain>Fusaro / DSM 804</strain>
    </source>
</reference>
<sequence>MHIMEGYLPAIWCIVWFVVSIPVVAYGVYKLNKLVKEERGILPVLAVAGAFIFVLSSLKMPSVTGSCSHPTGTGIGAIIFGPAITAVLSTIVLIYQALFLAHGGLTTLGANVFSMGIVGPIVAYLIYKTGMKAKLNFYLIVFLAATLGDWATYIVTSTELALAFPAGDILTFGGFFSSFSKFVAIFAITQVPLAIVEGAVSALLFKYIIQAKSDLLVEMKVIGEPLVRKLRGLPA</sequence>
<feature type="chain" id="PRO_0000411159" description="Putative cobalt transport protein CbiM 2">
    <location>
        <begin position="1"/>
        <end position="235"/>
    </location>
</feature>
<feature type="transmembrane region" description="Helical" evidence="1">
    <location>
        <begin position="8"/>
        <end position="28"/>
    </location>
</feature>
<feature type="transmembrane region" description="Helical" evidence="1">
    <location>
        <begin position="40"/>
        <end position="60"/>
    </location>
</feature>
<feature type="transmembrane region" description="Helical" evidence="1">
    <location>
        <begin position="74"/>
        <end position="94"/>
    </location>
</feature>
<feature type="transmembrane region" description="Helical" evidence="1">
    <location>
        <begin position="107"/>
        <end position="127"/>
    </location>
</feature>
<feature type="transmembrane region" description="Helical" evidence="1">
    <location>
        <begin position="135"/>
        <end position="155"/>
    </location>
</feature>
<feature type="transmembrane region" description="Helical" evidence="1">
    <location>
        <begin position="160"/>
        <end position="180"/>
    </location>
</feature>
<feature type="transmembrane region" description="Helical" evidence="1">
    <location>
        <begin position="185"/>
        <end position="205"/>
    </location>
</feature>
<accession>Q46AL8</accession>
<evidence type="ECO:0000255" key="1">
    <source>
        <dbReference type="HAMAP-Rule" id="MF_01462"/>
    </source>
</evidence>